<dbReference type="EMBL" id="AK133295">
    <property type="protein sequence ID" value="BAE21598.1"/>
    <property type="molecule type" value="mRNA"/>
</dbReference>
<dbReference type="EMBL" id="BC147594">
    <property type="protein sequence ID" value="AAI47595.1"/>
    <property type="molecule type" value="mRNA"/>
</dbReference>
<dbReference type="CCDS" id="CCDS52209.1"/>
<dbReference type="RefSeq" id="NP_001028954.1">
    <property type="nucleotide sequence ID" value="NM_001033782.3"/>
</dbReference>
<dbReference type="STRING" id="10090.ENSMUSP00000094809"/>
<dbReference type="iPTMnet" id="Q3V0A6"/>
<dbReference type="PhosphoSitePlus" id="Q3V0A6"/>
<dbReference type="PaxDb" id="10090-ENSMUSP00000094809"/>
<dbReference type="ProteomicsDB" id="265558"/>
<dbReference type="Ensembl" id="ENSMUST00000097044.3">
    <property type="protein sequence ID" value="ENSMUSP00000094809.3"/>
    <property type="gene ID" value="ENSMUSG00000072259.4"/>
</dbReference>
<dbReference type="Ensembl" id="ENSMUST00000206490.2">
    <property type="protein sequence ID" value="ENSMUSP00000145899.2"/>
    <property type="gene ID" value="ENSMUSG00000072259.4"/>
</dbReference>
<dbReference type="GeneID" id="434172"/>
<dbReference type="KEGG" id="mmu:434172"/>
<dbReference type="UCSC" id="uc009glk.1">
    <property type="organism name" value="mouse"/>
</dbReference>
<dbReference type="AGR" id="MGI:3648691"/>
<dbReference type="MGI" id="MGI:3648691">
    <property type="gene designation" value="Gm5592"/>
</dbReference>
<dbReference type="VEuPathDB" id="HostDB:ENSMUSG00000072259"/>
<dbReference type="eggNOG" id="ENOG502SEP6">
    <property type="taxonomic scope" value="Eukaryota"/>
</dbReference>
<dbReference type="GeneTree" id="ENSGT00390000014208"/>
<dbReference type="HOGENOM" id="CLU_016596_0_0_1"/>
<dbReference type="InParanoid" id="Q3V0A6"/>
<dbReference type="OMA" id="PRICHSM"/>
<dbReference type="OrthoDB" id="9808992at2759"/>
<dbReference type="PhylomeDB" id="Q3V0A6"/>
<dbReference type="TreeFam" id="TF337929"/>
<dbReference type="BioGRID-ORCS" id="434172">
    <property type="hits" value="2 hits in 69 CRISPR screens"/>
</dbReference>
<dbReference type="ChiTaRS" id="Gm5592">
    <property type="organism name" value="mouse"/>
</dbReference>
<dbReference type="PRO" id="PR:Q3V0A6"/>
<dbReference type="Proteomes" id="UP000000589">
    <property type="component" value="Chromosome 7"/>
</dbReference>
<dbReference type="RNAct" id="Q3V0A6">
    <property type="molecule type" value="protein"/>
</dbReference>
<dbReference type="Bgee" id="ENSMUSG00000072259">
    <property type="expression patterns" value="Expressed in spermatocyte and 2 other cell types or tissues"/>
</dbReference>
<dbReference type="InterPro" id="IPR040292">
    <property type="entry name" value="C2orf78-like"/>
</dbReference>
<dbReference type="InterPro" id="IPR027898">
    <property type="entry name" value="DUF4629"/>
</dbReference>
<dbReference type="PANTHER" id="PTHR31466">
    <property type="entry name" value="GENE 5591-RELATED"/>
    <property type="match status" value="1"/>
</dbReference>
<dbReference type="PANTHER" id="PTHR31466:SF10">
    <property type="entry name" value="MCG1026354, ISOFORM CRA_A-RELATED"/>
    <property type="match status" value="1"/>
</dbReference>
<dbReference type="Pfam" id="PF15442">
    <property type="entry name" value="DUF4629"/>
    <property type="match status" value="1"/>
</dbReference>
<feature type="chain" id="PRO_0000319423" description="Uncharacterized protein C2orf78 homolog">
    <location>
        <begin position="1"/>
        <end position="857"/>
    </location>
</feature>
<feature type="region of interest" description="Disordered" evidence="1">
    <location>
        <begin position="316"/>
        <end position="339"/>
    </location>
</feature>
<feature type="region of interest" description="Disordered" evidence="1">
    <location>
        <begin position="484"/>
        <end position="561"/>
    </location>
</feature>
<feature type="region of interest" description="Disordered" evidence="1">
    <location>
        <begin position="619"/>
        <end position="777"/>
    </location>
</feature>
<feature type="region of interest" description="Disordered" evidence="1">
    <location>
        <begin position="809"/>
        <end position="836"/>
    </location>
</feature>
<feature type="compositionally biased region" description="Basic and acidic residues" evidence="1">
    <location>
        <begin position="324"/>
        <end position="339"/>
    </location>
</feature>
<feature type="compositionally biased region" description="Basic and acidic residues" evidence="1">
    <location>
        <begin position="518"/>
        <end position="534"/>
    </location>
</feature>
<feature type="compositionally biased region" description="Basic and acidic residues" evidence="1">
    <location>
        <begin position="630"/>
        <end position="640"/>
    </location>
</feature>
<feature type="compositionally biased region" description="Polar residues" evidence="1">
    <location>
        <begin position="683"/>
        <end position="700"/>
    </location>
</feature>
<feature type="compositionally biased region" description="Low complexity" evidence="1">
    <location>
        <begin position="708"/>
        <end position="725"/>
    </location>
</feature>
<feature type="compositionally biased region" description="Polar residues" evidence="1">
    <location>
        <begin position="726"/>
        <end position="738"/>
    </location>
</feature>
<feature type="compositionally biased region" description="Basic and acidic residues" evidence="1">
    <location>
        <begin position="809"/>
        <end position="828"/>
    </location>
</feature>
<reference key="1">
    <citation type="journal article" date="2005" name="Science">
        <title>The transcriptional landscape of the mammalian genome.</title>
        <authorList>
            <person name="Carninci P."/>
            <person name="Kasukawa T."/>
            <person name="Katayama S."/>
            <person name="Gough J."/>
            <person name="Frith M.C."/>
            <person name="Maeda N."/>
            <person name="Oyama R."/>
            <person name="Ravasi T."/>
            <person name="Lenhard B."/>
            <person name="Wells C."/>
            <person name="Kodzius R."/>
            <person name="Shimokawa K."/>
            <person name="Bajic V.B."/>
            <person name="Brenner S.E."/>
            <person name="Batalov S."/>
            <person name="Forrest A.R."/>
            <person name="Zavolan M."/>
            <person name="Davis M.J."/>
            <person name="Wilming L.G."/>
            <person name="Aidinis V."/>
            <person name="Allen J.E."/>
            <person name="Ambesi-Impiombato A."/>
            <person name="Apweiler R."/>
            <person name="Aturaliya R.N."/>
            <person name="Bailey T.L."/>
            <person name="Bansal M."/>
            <person name="Baxter L."/>
            <person name="Beisel K.W."/>
            <person name="Bersano T."/>
            <person name="Bono H."/>
            <person name="Chalk A.M."/>
            <person name="Chiu K.P."/>
            <person name="Choudhary V."/>
            <person name="Christoffels A."/>
            <person name="Clutterbuck D.R."/>
            <person name="Crowe M.L."/>
            <person name="Dalla E."/>
            <person name="Dalrymple B.P."/>
            <person name="de Bono B."/>
            <person name="Della Gatta G."/>
            <person name="di Bernardo D."/>
            <person name="Down T."/>
            <person name="Engstrom P."/>
            <person name="Fagiolini M."/>
            <person name="Faulkner G."/>
            <person name="Fletcher C.F."/>
            <person name="Fukushima T."/>
            <person name="Furuno M."/>
            <person name="Futaki S."/>
            <person name="Gariboldi M."/>
            <person name="Georgii-Hemming P."/>
            <person name="Gingeras T.R."/>
            <person name="Gojobori T."/>
            <person name="Green R.E."/>
            <person name="Gustincich S."/>
            <person name="Harbers M."/>
            <person name="Hayashi Y."/>
            <person name="Hensch T.K."/>
            <person name="Hirokawa N."/>
            <person name="Hill D."/>
            <person name="Huminiecki L."/>
            <person name="Iacono M."/>
            <person name="Ikeo K."/>
            <person name="Iwama A."/>
            <person name="Ishikawa T."/>
            <person name="Jakt M."/>
            <person name="Kanapin A."/>
            <person name="Katoh M."/>
            <person name="Kawasawa Y."/>
            <person name="Kelso J."/>
            <person name="Kitamura H."/>
            <person name="Kitano H."/>
            <person name="Kollias G."/>
            <person name="Krishnan S.P."/>
            <person name="Kruger A."/>
            <person name="Kummerfeld S.K."/>
            <person name="Kurochkin I.V."/>
            <person name="Lareau L.F."/>
            <person name="Lazarevic D."/>
            <person name="Lipovich L."/>
            <person name="Liu J."/>
            <person name="Liuni S."/>
            <person name="McWilliam S."/>
            <person name="Madan Babu M."/>
            <person name="Madera M."/>
            <person name="Marchionni L."/>
            <person name="Matsuda H."/>
            <person name="Matsuzawa S."/>
            <person name="Miki H."/>
            <person name="Mignone F."/>
            <person name="Miyake S."/>
            <person name="Morris K."/>
            <person name="Mottagui-Tabar S."/>
            <person name="Mulder N."/>
            <person name="Nakano N."/>
            <person name="Nakauchi H."/>
            <person name="Ng P."/>
            <person name="Nilsson R."/>
            <person name="Nishiguchi S."/>
            <person name="Nishikawa S."/>
            <person name="Nori F."/>
            <person name="Ohara O."/>
            <person name="Okazaki Y."/>
            <person name="Orlando V."/>
            <person name="Pang K.C."/>
            <person name="Pavan W.J."/>
            <person name="Pavesi G."/>
            <person name="Pesole G."/>
            <person name="Petrovsky N."/>
            <person name="Piazza S."/>
            <person name="Reed J."/>
            <person name="Reid J.F."/>
            <person name="Ring B.Z."/>
            <person name="Ringwald M."/>
            <person name="Rost B."/>
            <person name="Ruan Y."/>
            <person name="Salzberg S.L."/>
            <person name="Sandelin A."/>
            <person name="Schneider C."/>
            <person name="Schoenbach C."/>
            <person name="Sekiguchi K."/>
            <person name="Semple C.A."/>
            <person name="Seno S."/>
            <person name="Sessa L."/>
            <person name="Sheng Y."/>
            <person name="Shibata Y."/>
            <person name="Shimada H."/>
            <person name="Shimada K."/>
            <person name="Silva D."/>
            <person name="Sinclair B."/>
            <person name="Sperling S."/>
            <person name="Stupka E."/>
            <person name="Sugiura K."/>
            <person name="Sultana R."/>
            <person name="Takenaka Y."/>
            <person name="Taki K."/>
            <person name="Tammoja K."/>
            <person name="Tan S.L."/>
            <person name="Tang S."/>
            <person name="Taylor M.S."/>
            <person name="Tegner J."/>
            <person name="Teichmann S.A."/>
            <person name="Ueda H.R."/>
            <person name="van Nimwegen E."/>
            <person name="Verardo R."/>
            <person name="Wei C.L."/>
            <person name="Yagi K."/>
            <person name="Yamanishi H."/>
            <person name="Zabarovsky E."/>
            <person name="Zhu S."/>
            <person name="Zimmer A."/>
            <person name="Hide W."/>
            <person name="Bult C."/>
            <person name="Grimmond S.M."/>
            <person name="Teasdale R.D."/>
            <person name="Liu E.T."/>
            <person name="Brusic V."/>
            <person name="Quackenbush J."/>
            <person name="Wahlestedt C."/>
            <person name="Mattick J.S."/>
            <person name="Hume D.A."/>
            <person name="Kai C."/>
            <person name="Sasaki D."/>
            <person name="Tomaru Y."/>
            <person name="Fukuda S."/>
            <person name="Kanamori-Katayama M."/>
            <person name="Suzuki M."/>
            <person name="Aoki J."/>
            <person name="Arakawa T."/>
            <person name="Iida J."/>
            <person name="Imamura K."/>
            <person name="Itoh M."/>
            <person name="Kato T."/>
            <person name="Kawaji H."/>
            <person name="Kawagashira N."/>
            <person name="Kawashima T."/>
            <person name="Kojima M."/>
            <person name="Kondo S."/>
            <person name="Konno H."/>
            <person name="Nakano K."/>
            <person name="Ninomiya N."/>
            <person name="Nishio T."/>
            <person name="Okada M."/>
            <person name="Plessy C."/>
            <person name="Shibata K."/>
            <person name="Shiraki T."/>
            <person name="Suzuki S."/>
            <person name="Tagami M."/>
            <person name="Waki K."/>
            <person name="Watahiki A."/>
            <person name="Okamura-Oho Y."/>
            <person name="Suzuki H."/>
            <person name="Kawai J."/>
            <person name="Hayashizaki Y."/>
        </authorList>
    </citation>
    <scope>NUCLEOTIDE SEQUENCE [LARGE SCALE MRNA]</scope>
    <source>
        <strain>C57BL/6J</strain>
        <tissue>Testis</tissue>
    </source>
</reference>
<reference key="2">
    <citation type="journal article" date="2004" name="Genome Res.">
        <title>The status, quality, and expansion of the NIH full-length cDNA project: the Mammalian Gene Collection (MGC).</title>
        <authorList>
            <consortium name="The MGC Project Team"/>
        </authorList>
    </citation>
    <scope>NUCLEOTIDE SEQUENCE [LARGE SCALE MRNA]</scope>
    <source>
        <tissue>Testis</tissue>
    </source>
</reference>
<proteinExistence type="evidence at transcript level"/>
<keyword id="KW-1185">Reference proteome</keyword>
<organism>
    <name type="scientific">Mus musculus</name>
    <name type="common">Mouse</name>
    <dbReference type="NCBI Taxonomy" id="10090"/>
    <lineage>
        <taxon>Eukaryota</taxon>
        <taxon>Metazoa</taxon>
        <taxon>Chordata</taxon>
        <taxon>Craniata</taxon>
        <taxon>Vertebrata</taxon>
        <taxon>Euteleostomi</taxon>
        <taxon>Mammalia</taxon>
        <taxon>Eutheria</taxon>
        <taxon>Euarchontoglires</taxon>
        <taxon>Glires</taxon>
        <taxon>Rodentia</taxon>
        <taxon>Myomorpha</taxon>
        <taxon>Muroidea</taxon>
        <taxon>Muridae</taxon>
        <taxon>Murinae</taxon>
        <taxon>Mus</taxon>
        <taxon>Mus</taxon>
    </lineage>
</organism>
<evidence type="ECO:0000256" key="1">
    <source>
        <dbReference type="SAM" id="MobiDB-lite"/>
    </source>
</evidence>
<gene>
    <name type="primary">Gm5592</name>
</gene>
<protein>
    <recommendedName>
        <fullName>Uncharacterized protein C2orf78 homolog</fullName>
    </recommendedName>
</protein>
<sequence length="857" mass="93729">MSENSQSSPFFGTESTLHPSLPLLSNSIQPAGTVCNFSRVSTPDVSSAWLLPSASSTSLQPLMGNAYLNPHAGTTMLTVLTEQGQISTSTPSYPGALKWDCTGSTHGREDALQEFNMKLIDQDTTLSSLAVTNQSDKILDPNVIVPFHPTLSSSFVQITPSQMPNQGYSLAPSYQEGSQVYYYEHNNLGPLIAGEFGQCLKAHGSVSYPGSQTSVLQPEMVMVLKEIQPRNIQMPLFTSAFSYSTSAQSMPDNGLPVVQMETSLGLPPSGQTHCQLQSPELCNTCVQVSQIRPPAVNGDKALTAPIHSPSEFLALPPAPSLEQPENKTMPEIKEGTKENQDRPVLTLEHPDLQQPLHCTDTESLRQKPDSDNAHLGCICMGPKELVGLENENGSSFNFKDITRLEADIQLPQLLNTLTDIDQDQSCETWTVTSGPSDQVRKNKHKSFELLEGAPQAKFQHWDLVEGEGAGGVAGASERAIDNMAKQPEGKAPKGPPSKNRKARKQEQERPSGPQNKSKKTEELKQSRNTAKAEENLSIPKTKRKRNPPELSQNSFKKPRTNLAMHMLESVQVFHPLGKKTEKKTGISSFRGLRTFTINKDPGPGSGTVTTTVLNMPCEGQFPPKSPGKVQRAESSIDKDCLSPSQYELPPAGKVKLVPLPFPTLDKPQSRPASRKPLSLALRRTTTVQPHSHSAQPTTLRPAQPPPVSSSLIASAKPAPPISSSSTGPNVTNPNQSSAVPHLVTSRPVPYRASSHTSFQRELVSAARNKVPSPPKPQTKYLLHDFSRQPIPWKKVDILGPVVSQPITKEQRPEREAMKRQAQQERENAVKNPSTGKLQIFLQRERDMEISQYYGYAM</sequence>
<name>CB078_MOUSE</name>
<accession>Q3V0A6</accession>
<accession>B2RW58</accession>